<proteinExistence type="inferred from homology"/>
<protein>
    <recommendedName>
        <fullName evidence="1">Phosphomethylpyrimidine synthase 1</fullName>
        <ecNumber evidence="1">4.1.99.17</ecNumber>
    </recommendedName>
    <alternativeName>
        <fullName evidence="1">Hydroxymethylpyrimidine phosphate synthase 1</fullName>
        <shortName evidence="1">HMP-P synthase 1</shortName>
        <shortName evidence="1">HMP-phosphate synthase 1</shortName>
        <shortName evidence="1">HMPP synthase 1</shortName>
    </alternativeName>
    <alternativeName>
        <fullName evidence="1">Thiamine biosynthesis protein ThiC 1</fullName>
    </alternativeName>
</protein>
<sequence>MMRKFHEITGTETGAVSGEAGTIGTRKVYVTGSRPDIRVPMKEIVQKVGAQDESGTELLKIYLYDTSGPFTDPGAAVNIRAGLPAMREAWIEERHDSMVLSQLSSEYGRQRLAGRVEGGQYFPEERLPRRAGKGCNVTQMHYARKGIVTPEMEYIAIRENQRRESLPELLKKQHPGDPRGTRMPQVITPEYVRDEVAAGRAVIPCNINHPECEPMIIGRNFLVKINANIGNSAMSSSIDEEVEKMIWAIRWGGDTVMDLSTGVDIHETREWIIRNSPVPIGTVPIYQALEKVGGQAEELSWEIFRDTLIEQAEQGVDYFTIHAGVRSNLLEAAQRRLTGIVSRGGSIMTKWCKAHGQESFLYTRFEEICEIAKAYDVTFSLGDGLRPGSIYDANDEAQIEELKTLGELTETAWRHDVQVMIEGPGHVPMHMIQENMDLQLKYCHGAPFYTLGPLVTDIAPGYDHITSAIGGTMMAWCGTAMLCYVTPKEHLGLPDKNDVREGIVAHKIAAHAADLAKGHPGAQARDNALSKARFEFRWQDQFALGLDPERAMGIRKALLPEDAEDKEQYCTMCGPDFCSMKITRSLREGAAGGKEE</sequence>
<evidence type="ECO:0000255" key="1">
    <source>
        <dbReference type="HAMAP-Rule" id="MF_00089"/>
    </source>
</evidence>
<organism>
    <name type="scientific">Syntrophotalea carbinolica (strain DSM 2380 / NBRC 103641 / GraBd1)</name>
    <name type="common">Pelobacter carbinolicus</name>
    <dbReference type="NCBI Taxonomy" id="338963"/>
    <lineage>
        <taxon>Bacteria</taxon>
        <taxon>Pseudomonadati</taxon>
        <taxon>Thermodesulfobacteriota</taxon>
        <taxon>Desulfuromonadia</taxon>
        <taxon>Desulfuromonadales</taxon>
        <taxon>Syntrophotaleaceae</taxon>
        <taxon>Syntrophotalea</taxon>
    </lineage>
</organism>
<name>THIC1_SYNC1</name>
<keyword id="KW-0004">4Fe-4S</keyword>
<keyword id="KW-0408">Iron</keyword>
<keyword id="KW-0411">Iron-sulfur</keyword>
<keyword id="KW-0456">Lyase</keyword>
<keyword id="KW-0479">Metal-binding</keyword>
<keyword id="KW-1185">Reference proteome</keyword>
<keyword id="KW-0949">S-adenosyl-L-methionine</keyword>
<keyword id="KW-0784">Thiamine biosynthesis</keyword>
<keyword id="KW-0862">Zinc</keyword>
<reference key="1">
    <citation type="submission" date="2005-10" db="EMBL/GenBank/DDBJ databases">
        <title>Complete sequence of Pelobacter carbinolicus DSM 2380.</title>
        <authorList>
            <person name="Copeland A."/>
            <person name="Lucas S."/>
            <person name="Lapidus A."/>
            <person name="Barry K."/>
            <person name="Detter J.C."/>
            <person name="Glavina T."/>
            <person name="Hammon N."/>
            <person name="Israni S."/>
            <person name="Pitluck S."/>
            <person name="Chertkov O."/>
            <person name="Schmutz J."/>
            <person name="Larimer F."/>
            <person name="Land M."/>
            <person name="Kyrpides N."/>
            <person name="Ivanova N."/>
            <person name="Richardson P."/>
        </authorList>
    </citation>
    <scope>NUCLEOTIDE SEQUENCE [LARGE SCALE GENOMIC DNA]</scope>
    <source>
        <strain>DSM 2380 / NBRC 103641 / GraBd1</strain>
    </source>
</reference>
<comment type="function">
    <text evidence="1">Catalyzes the synthesis of the hydroxymethylpyrimidine phosphate (HMP-P) moiety of thiamine from aminoimidazole ribotide (AIR) in a radical S-adenosyl-L-methionine (SAM)-dependent reaction.</text>
</comment>
<comment type="catalytic activity">
    <reaction evidence="1">
        <text>5-amino-1-(5-phospho-beta-D-ribosyl)imidazole + S-adenosyl-L-methionine = 4-amino-2-methyl-5-(phosphooxymethyl)pyrimidine + CO + 5'-deoxyadenosine + formate + L-methionine + 3 H(+)</text>
        <dbReference type="Rhea" id="RHEA:24840"/>
        <dbReference type="ChEBI" id="CHEBI:15378"/>
        <dbReference type="ChEBI" id="CHEBI:15740"/>
        <dbReference type="ChEBI" id="CHEBI:17245"/>
        <dbReference type="ChEBI" id="CHEBI:17319"/>
        <dbReference type="ChEBI" id="CHEBI:57844"/>
        <dbReference type="ChEBI" id="CHEBI:58354"/>
        <dbReference type="ChEBI" id="CHEBI:59789"/>
        <dbReference type="ChEBI" id="CHEBI:137981"/>
        <dbReference type="EC" id="4.1.99.17"/>
    </reaction>
</comment>
<comment type="cofactor">
    <cofactor evidence="1">
        <name>[4Fe-4S] cluster</name>
        <dbReference type="ChEBI" id="CHEBI:49883"/>
    </cofactor>
    <text evidence="1">Binds 1 [4Fe-4S] cluster per subunit. The cluster is coordinated with 3 cysteines and an exchangeable S-adenosyl-L-methionine.</text>
</comment>
<comment type="pathway">
    <text evidence="1">Cofactor biosynthesis; thiamine diphosphate biosynthesis.</text>
</comment>
<comment type="subunit">
    <text evidence="1">Homodimer.</text>
</comment>
<comment type="similarity">
    <text evidence="1">Belongs to the ThiC family.</text>
</comment>
<accession>Q3A7P7</accession>
<dbReference type="EC" id="4.1.99.17" evidence="1"/>
<dbReference type="EMBL" id="CP000142">
    <property type="protein sequence ID" value="ABA87597.1"/>
    <property type="molecule type" value="Genomic_DNA"/>
</dbReference>
<dbReference type="RefSeq" id="WP_011340015.1">
    <property type="nucleotide sequence ID" value="NC_007498.2"/>
</dbReference>
<dbReference type="SMR" id="Q3A7P7"/>
<dbReference type="STRING" id="338963.Pcar_0337"/>
<dbReference type="KEGG" id="pca:Pcar_0337"/>
<dbReference type="eggNOG" id="COG0422">
    <property type="taxonomic scope" value="Bacteria"/>
</dbReference>
<dbReference type="HOGENOM" id="CLU_013181_2_1_7"/>
<dbReference type="OrthoDB" id="9805897at2"/>
<dbReference type="UniPathway" id="UPA00060"/>
<dbReference type="Proteomes" id="UP000002534">
    <property type="component" value="Chromosome"/>
</dbReference>
<dbReference type="GO" id="GO:0005829">
    <property type="term" value="C:cytosol"/>
    <property type="evidence" value="ECO:0007669"/>
    <property type="project" value="TreeGrafter"/>
</dbReference>
<dbReference type="GO" id="GO:0051539">
    <property type="term" value="F:4 iron, 4 sulfur cluster binding"/>
    <property type="evidence" value="ECO:0007669"/>
    <property type="project" value="UniProtKB-KW"/>
</dbReference>
<dbReference type="GO" id="GO:0016830">
    <property type="term" value="F:carbon-carbon lyase activity"/>
    <property type="evidence" value="ECO:0007669"/>
    <property type="project" value="InterPro"/>
</dbReference>
<dbReference type="GO" id="GO:0008270">
    <property type="term" value="F:zinc ion binding"/>
    <property type="evidence" value="ECO:0007669"/>
    <property type="project" value="UniProtKB-UniRule"/>
</dbReference>
<dbReference type="GO" id="GO:0009228">
    <property type="term" value="P:thiamine biosynthetic process"/>
    <property type="evidence" value="ECO:0007669"/>
    <property type="project" value="UniProtKB-KW"/>
</dbReference>
<dbReference type="GO" id="GO:0009229">
    <property type="term" value="P:thiamine diphosphate biosynthetic process"/>
    <property type="evidence" value="ECO:0007669"/>
    <property type="project" value="UniProtKB-UniRule"/>
</dbReference>
<dbReference type="FunFam" id="3.20.20.540:FF:000001">
    <property type="entry name" value="Phosphomethylpyrimidine synthase"/>
    <property type="match status" value="1"/>
</dbReference>
<dbReference type="Gene3D" id="6.10.250.620">
    <property type="match status" value="1"/>
</dbReference>
<dbReference type="Gene3D" id="3.20.20.540">
    <property type="entry name" value="Radical SAM ThiC family, central domain"/>
    <property type="match status" value="1"/>
</dbReference>
<dbReference type="HAMAP" id="MF_00089">
    <property type="entry name" value="ThiC"/>
    <property type="match status" value="1"/>
</dbReference>
<dbReference type="InterPro" id="IPR037509">
    <property type="entry name" value="ThiC"/>
</dbReference>
<dbReference type="InterPro" id="IPR025747">
    <property type="entry name" value="ThiC-associated_dom"/>
</dbReference>
<dbReference type="InterPro" id="IPR038521">
    <property type="entry name" value="ThiC/Bza_core_dom"/>
</dbReference>
<dbReference type="InterPro" id="IPR002817">
    <property type="entry name" value="ThiC/BzaA/B"/>
</dbReference>
<dbReference type="NCBIfam" id="NF006763">
    <property type="entry name" value="PRK09284.1"/>
    <property type="match status" value="1"/>
</dbReference>
<dbReference type="NCBIfam" id="NF009895">
    <property type="entry name" value="PRK13352.1"/>
    <property type="match status" value="1"/>
</dbReference>
<dbReference type="NCBIfam" id="TIGR00190">
    <property type="entry name" value="thiC"/>
    <property type="match status" value="1"/>
</dbReference>
<dbReference type="PANTHER" id="PTHR30557:SF1">
    <property type="entry name" value="PHOSPHOMETHYLPYRIMIDINE SYNTHASE, CHLOROPLASTIC"/>
    <property type="match status" value="1"/>
</dbReference>
<dbReference type="PANTHER" id="PTHR30557">
    <property type="entry name" value="THIAMINE BIOSYNTHESIS PROTEIN THIC"/>
    <property type="match status" value="1"/>
</dbReference>
<dbReference type="Pfam" id="PF13667">
    <property type="entry name" value="ThiC-associated"/>
    <property type="match status" value="1"/>
</dbReference>
<dbReference type="Pfam" id="PF01964">
    <property type="entry name" value="ThiC_Rad_SAM"/>
    <property type="match status" value="1"/>
</dbReference>
<dbReference type="SFLD" id="SFLDF00407">
    <property type="entry name" value="phosphomethylpyrimidine_syntha"/>
    <property type="match status" value="1"/>
</dbReference>
<dbReference type="SFLD" id="SFLDG01114">
    <property type="entry name" value="phosphomethylpyrimidine_syntha"/>
    <property type="match status" value="1"/>
</dbReference>
<dbReference type="SFLD" id="SFLDS00113">
    <property type="entry name" value="Radical_SAM_Phosphomethylpyrim"/>
    <property type="match status" value="1"/>
</dbReference>
<feature type="chain" id="PRO_0000242281" description="Phosphomethylpyrimidine synthase 1">
    <location>
        <begin position="1"/>
        <end position="596"/>
    </location>
</feature>
<feature type="binding site" evidence="1">
    <location>
        <position position="228"/>
    </location>
    <ligand>
        <name>substrate</name>
    </ligand>
</feature>
<feature type="binding site" evidence="1">
    <location>
        <position position="257"/>
    </location>
    <ligand>
        <name>substrate</name>
    </ligand>
</feature>
<feature type="binding site" evidence="1">
    <location>
        <position position="286"/>
    </location>
    <ligand>
        <name>substrate</name>
    </ligand>
</feature>
<feature type="binding site" evidence="1">
    <location>
        <position position="322"/>
    </location>
    <ligand>
        <name>substrate</name>
    </ligand>
</feature>
<feature type="binding site" evidence="1">
    <location>
        <begin position="342"/>
        <end position="344"/>
    </location>
    <ligand>
        <name>substrate</name>
    </ligand>
</feature>
<feature type="binding site" evidence="1">
    <location>
        <begin position="383"/>
        <end position="386"/>
    </location>
    <ligand>
        <name>substrate</name>
    </ligand>
</feature>
<feature type="binding site" evidence="1">
    <location>
        <position position="422"/>
    </location>
    <ligand>
        <name>substrate</name>
    </ligand>
</feature>
<feature type="binding site" evidence="1">
    <location>
        <position position="426"/>
    </location>
    <ligand>
        <name>Zn(2+)</name>
        <dbReference type="ChEBI" id="CHEBI:29105"/>
    </ligand>
</feature>
<feature type="binding site" evidence="1">
    <location>
        <position position="449"/>
    </location>
    <ligand>
        <name>substrate</name>
    </ligand>
</feature>
<feature type="binding site" evidence="1">
    <location>
        <position position="490"/>
    </location>
    <ligand>
        <name>Zn(2+)</name>
        <dbReference type="ChEBI" id="CHEBI:29105"/>
    </ligand>
</feature>
<feature type="binding site" evidence="1">
    <location>
        <position position="570"/>
    </location>
    <ligand>
        <name>[4Fe-4S] cluster</name>
        <dbReference type="ChEBI" id="CHEBI:49883"/>
        <note>4Fe-4S-S-AdoMet</note>
    </ligand>
</feature>
<feature type="binding site" evidence="1">
    <location>
        <position position="573"/>
    </location>
    <ligand>
        <name>[4Fe-4S] cluster</name>
        <dbReference type="ChEBI" id="CHEBI:49883"/>
        <note>4Fe-4S-S-AdoMet</note>
    </ligand>
</feature>
<feature type="binding site" evidence="1">
    <location>
        <position position="578"/>
    </location>
    <ligand>
        <name>[4Fe-4S] cluster</name>
        <dbReference type="ChEBI" id="CHEBI:49883"/>
        <note>4Fe-4S-S-AdoMet</note>
    </ligand>
</feature>
<gene>
    <name evidence="1" type="primary">thiC1</name>
    <name type="ordered locus">Pcar_0337</name>
</gene>